<comment type="function">
    <text evidence="1">Catalyzes the phosphorolysis of diverse nucleosides, yielding D-ribose 1-phosphate and the respective free bases. Can use uridine, adenosine, guanosine, cytidine, thymidine, inosine and xanthosine as substrates. Also catalyzes the reverse reactions.</text>
</comment>
<comment type="catalytic activity">
    <reaction evidence="1">
        <text>a purine D-ribonucleoside + phosphate = a purine nucleobase + alpha-D-ribose 1-phosphate</text>
        <dbReference type="Rhea" id="RHEA:19805"/>
        <dbReference type="ChEBI" id="CHEBI:26386"/>
        <dbReference type="ChEBI" id="CHEBI:43474"/>
        <dbReference type="ChEBI" id="CHEBI:57720"/>
        <dbReference type="ChEBI" id="CHEBI:142355"/>
        <dbReference type="EC" id="2.4.2.1"/>
    </reaction>
</comment>
<comment type="catalytic activity">
    <reaction evidence="1">
        <text>adenosine + phosphate = alpha-D-ribose 1-phosphate + adenine</text>
        <dbReference type="Rhea" id="RHEA:27642"/>
        <dbReference type="ChEBI" id="CHEBI:16335"/>
        <dbReference type="ChEBI" id="CHEBI:16708"/>
        <dbReference type="ChEBI" id="CHEBI:43474"/>
        <dbReference type="ChEBI" id="CHEBI:57720"/>
        <dbReference type="EC" id="2.4.2.1"/>
    </reaction>
</comment>
<comment type="catalytic activity">
    <reaction evidence="1">
        <text>cytidine + phosphate = cytosine + alpha-D-ribose 1-phosphate</text>
        <dbReference type="Rhea" id="RHEA:52540"/>
        <dbReference type="ChEBI" id="CHEBI:16040"/>
        <dbReference type="ChEBI" id="CHEBI:17562"/>
        <dbReference type="ChEBI" id="CHEBI:43474"/>
        <dbReference type="ChEBI" id="CHEBI:57720"/>
        <dbReference type="EC" id="2.4.2.2"/>
    </reaction>
</comment>
<comment type="catalytic activity">
    <reaction evidence="1">
        <text>guanosine + phosphate = alpha-D-ribose 1-phosphate + guanine</text>
        <dbReference type="Rhea" id="RHEA:13233"/>
        <dbReference type="ChEBI" id="CHEBI:16235"/>
        <dbReference type="ChEBI" id="CHEBI:16750"/>
        <dbReference type="ChEBI" id="CHEBI:43474"/>
        <dbReference type="ChEBI" id="CHEBI:57720"/>
        <dbReference type="EC" id="2.4.2.1"/>
    </reaction>
</comment>
<comment type="catalytic activity">
    <reaction evidence="1">
        <text>inosine + phosphate = alpha-D-ribose 1-phosphate + hypoxanthine</text>
        <dbReference type="Rhea" id="RHEA:27646"/>
        <dbReference type="ChEBI" id="CHEBI:17368"/>
        <dbReference type="ChEBI" id="CHEBI:17596"/>
        <dbReference type="ChEBI" id="CHEBI:43474"/>
        <dbReference type="ChEBI" id="CHEBI:57720"/>
        <dbReference type="EC" id="2.4.2.1"/>
    </reaction>
</comment>
<comment type="catalytic activity">
    <reaction evidence="1">
        <text>thymidine + phosphate = 2-deoxy-alpha-D-ribose 1-phosphate + thymine</text>
        <dbReference type="Rhea" id="RHEA:16037"/>
        <dbReference type="ChEBI" id="CHEBI:17748"/>
        <dbReference type="ChEBI" id="CHEBI:17821"/>
        <dbReference type="ChEBI" id="CHEBI:43474"/>
        <dbReference type="ChEBI" id="CHEBI:57259"/>
        <dbReference type="EC" id="2.4.2.2"/>
    </reaction>
</comment>
<comment type="catalytic activity">
    <reaction evidence="1">
        <text>uridine + phosphate = alpha-D-ribose 1-phosphate + uracil</text>
        <dbReference type="Rhea" id="RHEA:24388"/>
        <dbReference type="ChEBI" id="CHEBI:16704"/>
        <dbReference type="ChEBI" id="CHEBI:17568"/>
        <dbReference type="ChEBI" id="CHEBI:43474"/>
        <dbReference type="ChEBI" id="CHEBI:57720"/>
        <dbReference type="EC" id="2.4.2.2"/>
    </reaction>
</comment>
<comment type="catalytic activity">
    <reaction evidence="1">
        <text>xanthosine + phosphate = alpha-D-ribose 1-phosphate + xanthine</text>
        <dbReference type="Rhea" id="RHEA:27638"/>
        <dbReference type="ChEBI" id="CHEBI:17712"/>
        <dbReference type="ChEBI" id="CHEBI:18107"/>
        <dbReference type="ChEBI" id="CHEBI:43474"/>
        <dbReference type="ChEBI" id="CHEBI:57720"/>
        <dbReference type="EC" id="2.4.2.1"/>
    </reaction>
</comment>
<comment type="similarity">
    <text evidence="1">Belongs to the nucleoside phosphorylase PpnP family.</text>
</comment>
<gene>
    <name evidence="1" type="primary">ppnP</name>
    <name type="ordered locus">CJA_1969</name>
</gene>
<protein>
    <recommendedName>
        <fullName evidence="1">Pyrimidine/purine nucleoside phosphorylase</fullName>
        <ecNumber evidence="1">2.4.2.1</ecNumber>
        <ecNumber evidence="1">2.4.2.2</ecNumber>
    </recommendedName>
    <alternativeName>
        <fullName evidence="1">Adenosine phosphorylase</fullName>
    </alternativeName>
    <alternativeName>
        <fullName evidence="1">Cytidine phosphorylase</fullName>
    </alternativeName>
    <alternativeName>
        <fullName evidence="1">Guanosine phosphorylase</fullName>
    </alternativeName>
    <alternativeName>
        <fullName evidence="1">Inosine phosphorylase</fullName>
    </alternativeName>
    <alternativeName>
        <fullName evidence="1">Thymidine phosphorylase</fullName>
    </alternativeName>
    <alternativeName>
        <fullName evidence="1">Uridine phosphorylase</fullName>
    </alternativeName>
    <alternativeName>
        <fullName evidence="1">Xanthosine phosphorylase</fullName>
    </alternativeName>
</protein>
<name>PPNP_CELJU</name>
<sequence length="93" mass="10190">MFKVNEYFDGAVKSIAFQTETLPATVGVMAKGSYEFGTSQKEYMTVVSGSLTVVLPGSDKAETFTQGQTFIVEANQRFNVTADVESSYLCCYE</sequence>
<dbReference type="EC" id="2.4.2.1" evidence="1"/>
<dbReference type="EC" id="2.4.2.2" evidence="1"/>
<dbReference type="EMBL" id="CP000934">
    <property type="protein sequence ID" value="ACE84083.1"/>
    <property type="molecule type" value="Genomic_DNA"/>
</dbReference>
<dbReference type="RefSeq" id="WP_012487578.1">
    <property type="nucleotide sequence ID" value="NC_010995.1"/>
</dbReference>
<dbReference type="SMR" id="B3PHG9"/>
<dbReference type="STRING" id="498211.CJA_1969"/>
<dbReference type="KEGG" id="cja:CJA_1969"/>
<dbReference type="eggNOG" id="COG3123">
    <property type="taxonomic scope" value="Bacteria"/>
</dbReference>
<dbReference type="HOGENOM" id="CLU_157874_0_0_6"/>
<dbReference type="OrthoDB" id="9793848at2"/>
<dbReference type="Proteomes" id="UP000001036">
    <property type="component" value="Chromosome"/>
</dbReference>
<dbReference type="GO" id="GO:0005829">
    <property type="term" value="C:cytosol"/>
    <property type="evidence" value="ECO:0007669"/>
    <property type="project" value="TreeGrafter"/>
</dbReference>
<dbReference type="GO" id="GO:0047975">
    <property type="term" value="F:guanosine phosphorylase activity"/>
    <property type="evidence" value="ECO:0007669"/>
    <property type="project" value="UniProtKB-EC"/>
</dbReference>
<dbReference type="GO" id="GO:0004731">
    <property type="term" value="F:purine-nucleoside phosphorylase activity"/>
    <property type="evidence" value="ECO:0007669"/>
    <property type="project" value="UniProtKB-UniRule"/>
</dbReference>
<dbReference type="GO" id="GO:0009032">
    <property type="term" value="F:thymidine phosphorylase activity"/>
    <property type="evidence" value="ECO:0007669"/>
    <property type="project" value="UniProtKB-EC"/>
</dbReference>
<dbReference type="GO" id="GO:0004850">
    <property type="term" value="F:uridine phosphorylase activity"/>
    <property type="evidence" value="ECO:0007669"/>
    <property type="project" value="UniProtKB-EC"/>
</dbReference>
<dbReference type="FunFam" id="2.60.120.10:FF:000016">
    <property type="entry name" value="Pyrimidine/purine nucleoside phosphorylase"/>
    <property type="match status" value="1"/>
</dbReference>
<dbReference type="Gene3D" id="2.60.120.10">
    <property type="entry name" value="Jelly Rolls"/>
    <property type="match status" value="1"/>
</dbReference>
<dbReference type="HAMAP" id="MF_01537">
    <property type="entry name" value="Nucleos_phosphorylase_PpnP"/>
    <property type="match status" value="1"/>
</dbReference>
<dbReference type="InterPro" id="IPR009664">
    <property type="entry name" value="Ppnp"/>
</dbReference>
<dbReference type="InterPro" id="IPR014710">
    <property type="entry name" value="RmlC-like_jellyroll"/>
</dbReference>
<dbReference type="InterPro" id="IPR011051">
    <property type="entry name" value="RmlC_Cupin_sf"/>
</dbReference>
<dbReference type="PANTHER" id="PTHR36540">
    <property type="entry name" value="PYRIMIDINE/PURINE NUCLEOSIDE PHOSPHORYLASE"/>
    <property type="match status" value="1"/>
</dbReference>
<dbReference type="PANTHER" id="PTHR36540:SF1">
    <property type="entry name" value="PYRIMIDINE_PURINE NUCLEOSIDE PHOSPHORYLASE"/>
    <property type="match status" value="1"/>
</dbReference>
<dbReference type="Pfam" id="PF06865">
    <property type="entry name" value="Ppnp"/>
    <property type="match status" value="1"/>
</dbReference>
<dbReference type="SUPFAM" id="SSF51182">
    <property type="entry name" value="RmlC-like cupins"/>
    <property type="match status" value="1"/>
</dbReference>
<reference key="1">
    <citation type="journal article" date="2008" name="J. Bacteriol.">
        <title>Insights into plant cell wall degradation from the genome sequence of the soil bacterium Cellvibrio japonicus.</title>
        <authorList>
            <person name="DeBoy R.T."/>
            <person name="Mongodin E.F."/>
            <person name="Fouts D.E."/>
            <person name="Tailford L.E."/>
            <person name="Khouri H."/>
            <person name="Emerson J.B."/>
            <person name="Mohamoud Y."/>
            <person name="Watkins K."/>
            <person name="Henrissat B."/>
            <person name="Gilbert H.J."/>
            <person name="Nelson K.E."/>
        </authorList>
    </citation>
    <scope>NUCLEOTIDE SEQUENCE [LARGE SCALE GENOMIC DNA]</scope>
    <source>
        <strain>Ueda107</strain>
    </source>
</reference>
<evidence type="ECO:0000255" key="1">
    <source>
        <dbReference type="HAMAP-Rule" id="MF_01537"/>
    </source>
</evidence>
<organism>
    <name type="scientific">Cellvibrio japonicus (strain Ueda107)</name>
    <name type="common">Pseudomonas fluorescens subsp. cellulosa</name>
    <dbReference type="NCBI Taxonomy" id="498211"/>
    <lineage>
        <taxon>Bacteria</taxon>
        <taxon>Pseudomonadati</taxon>
        <taxon>Pseudomonadota</taxon>
        <taxon>Gammaproteobacteria</taxon>
        <taxon>Cellvibrionales</taxon>
        <taxon>Cellvibrionaceae</taxon>
        <taxon>Cellvibrio</taxon>
    </lineage>
</organism>
<keyword id="KW-0328">Glycosyltransferase</keyword>
<keyword id="KW-1185">Reference proteome</keyword>
<keyword id="KW-0808">Transferase</keyword>
<accession>B3PHG9</accession>
<feature type="chain" id="PRO_1000198653" description="Pyrimidine/purine nucleoside phosphorylase">
    <location>
        <begin position="1"/>
        <end position="93"/>
    </location>
</feature>
<proteinExistence type="inferred from homology"/>